<feature type="chain" id="PRO_0000066153" description="Uncharacterized BphX-like protein">
    <location>
        <begin position="1"/>
        <end position="139"/>
    </location>
</feature>
<dbReference type="EMBL" id="M83673">
    <property type="protein sequence ID" value="AAA25745.1"/>
    <property type="molecule type" value="Genomic_DNA"/>
</dbReference>
<dbReference type="SMR" id="P0C1T2"/>
<dbReference type="InterPro" id="IPR009310">
    <property type="entry name" value="BphX"/>
</dbReference>
<dbReference type="Pfam" id="PF06139">
    <property type="entry name" value="BphX"/>
    <property type="match status" value="1"/>
</dbReference>
<reference key="1">
    <citation type="journal article" date="1992" name="J. Biol. Chem.">
        <title>Analysis of bph operon from the polychlorinated biphenyl-degrading strain of Pseudomonas pseudoalcaligenes KF707.</title>
        <authorList>
            <person name="Taira K."/>
            <person name="Hirose J."/>
            <person name="Hayashida S."/>
            <person name="Furukawa K."/>
        </authorList>
    </citation>
    <scope>NUCLEOTIDE SEQUENCE [GENOMIC DNA]</scope>
    <source>
        <strain>KF707</strain>
    </source>
</reference>
<accession>P0C1T2</accession>
<accession>P37336</accession>
<sequence>MKNARLFLIAIGVFYIINLIGTLPFSTLGLFGRMYPGVELHVGAPIFTLLQDAWAVVGLQLGAIGAVALWGARDPGRYRAVIPVVIATEVVDGLWDFYSIVWSHEALWFGLVTLVIHVLWIGWGLHAWRALASKSLRTL</sequence>
<name>YBPE_BURCE</name>
<protein>
    <recommendedName>
        <fullName>Uncharacterized BphX-like protein</fullName>
    </recommendedName>
    <alternativeName>
        <fullName>ORF1</fullName>
    </alternativeName>
</protein>
<proteinExistence type="predicted"/>
<organism>
    <name type="scientific">Burkholderia cepacia</name>
    <name type="common">Pseudomonas cepacia</name>
    <dbReference type="NCBI Taxonomy" id="292"/>
    <lineage>
        <taxon>Bacteria</taxon>
        <taxon>Pseudomonadati</taxon>
        <taxon>Pseudomonadota</taxon>
        <taxon>Betaproteobacteria</taxon>
        <taxon>Burkholderiales</taxon>
        <taxon>Burkholderiaceae</taxon>
        <taxon>Burkholderia</taxon>
        <taxon>Burkholderia cepacia complex</taxon>
    </lineage>
</organism>